<gene>
    <name type="primary">ABP5</name>
</gene>
<sequence>MVRRRPATGAAQRPQLAAVGRGLLLASVLAAAASSLPVAESSCPRDNSLVRDISRMQQSNYGREGFSHITVTGALAHGTKEVEVWLQTFGPGQRTPIHRHSCEEVFIVLKGKGTLLLGSSSLKYPGQPQEVPVFQNTTFSIPVNDPHQVW</sequence>
<accession>P33489</accession>
<name>ABP5_MAIZE</name>
<organism>
    <name type="scientific">Zea mays</name>
    <name type="common">Maize</name>
    <dbReference type="NCBI Taxonomy" id="4577"/>
    <lineage>
        <taxon>Eukaryota</taxon>
        <taxon>Viridiplantae</taxon>
        <taxon>Streptophyta</taxon>
        <taxon>Embryophyta</taxon>
        <taxon>Tracheophyta</taxon>
        <taxon>Spermatophyta</taxon>
        <taxon>Magnoliopsida</taxon>
        <taxon>Liliopsida</taxon>
        <taxon>Poales</taxon>
        <taxon>Poaceae</taxon>
        <taxon>PACMAD clade</taxon>
        <taxon>Panicoideae</taxon>
        <taxon>Andropogonodae</taxon>
        <taxon>Andropogoneae</taxon>
        <taxon>Tripsacinae</taxon>
        <taxon>Zea</taxon>
    </lineage>
</organism>
<evidence type="ECO:0000250" key="1"/>
<evidence type="ECO:0000250" key="2">
    <source>
        <dbReference type="UniProtKB" id="P13689"/>
    </source>
</evidence>
<protein>
    <recommendedName>
        <fullName>Auxin-binding protein 5</fullName>
        <shortName>ABP</shortName>
    </recommendedName>
    <alternativeName>
        <fullName>ERABP5</fullName>
    </alternativeName>
</protein>
<reference key="1">
    <citation type="journal article" date="1993" name="Plant J.">
        <title>Molecular analysis of three maize 22 kDa auxin-binding protein genes -- transient promoter expression and regulatory regions.</title>
        <authorList>
            <person name="Schwob E."/>
            <person name="Choi S.-Y."/>
            <person name="Simmons C."/>
            <person name="Migliaccio F."/>
            <person name="Ilag L."/>
            <person name="Hesse T."/>
            <person name="Palme K."/>
            <person name="Soell D."/>
        </authorList>
    </citation>
    <scope>NUCLEOTIDE SEQUENCE [GENOMIC DNA]</scope>
    <source>
        <strain>cv. Wisconsin 22</strain>
    </source>
</reference>
<proteinExistence type="inferred from homology"/>
<comment type="function">
    <text>This is probably a receptor for the plant hormone auxin.</text>
</comment>
<comment type="subunit">
    <text evidence="1">Homodimer.</text>
</comment>
<comment type="subcellular location">
    <subcellularLocation>
        <location>Endoplasmic reticulum lumen</location>
    </subcellularLocation>
</comment>
<keyword id="KW-0927">Auxin signaling pathway</keyword>
<keyword id="KW-0256">Endoplasmic reticulum</keyword>
<keyword id="KW-0325">Glycoprotein</keyword>
<keyword id="KW-0479">Metal-binding</keyword>
<keyword id="KW-0675">Receptor</keyword>
<keyword id="KW-1185">Reference proteome</keyword>
<keyword id="KW-0732">Signal</keyword>
<keyword id="KW-0862">Zinc</keyword>
<dbReference type="EMBL" id="L08427">
    <property type="protein sequence ID" value="AAA33432.1"/>
    <property type="molecule type" value="Genomic_DNA"/>
</dbReference>
<dbReference type="PIR" id="C43033">
    <property type="entry name" value="C43033"/>
</dbReference>
<dbReference type="SMR" id="P33489"/>
<dbReference type="STRING" id="4577.P33489"/>
<dbReference type="GlyCosmos" id="P33489">
    <property type="glycosylation" value="1 site, No reported glycans"/>
</dbReference>
<dbReference type="MaizeGDB" id="78602"/>
<dbReference type="InParanoid" id="P33489"/>
<dbReference type="Proteomes" id="UP000007305">
    <property type="component" value="Unplaced"/>
</dbReference>
<dbReference type="GO" id="GO:0005788">
    <property type="term" value="C:endoplasmic reticulum lumen"/>
    <property type="evidence" value="ECO:0007669"/>
    <property type="project" value="UniProtKB-SubCell"/>
</dbReference>
<dbReference type="GO" id="GO:0010011">
    <property type="term" value="F:auxin binding"/>
    <property type="evidence" value="ECO:0000250"/>
    <property type="project" value="UniProtKB"/>
</dbReference>
<dbReference type="GO" id="GO:0008270">
    <property type="term" value="F:zinc ion binding"/>
    <property type="evidence" value="ECO:0000250"/>
    <property type="project" value="UniProtKB"/>
</dbReference>
<dbReference type="GO" id="GO:0009734">
    <property type="term" value="P:auxin-activated signaling pathway"/>
    <property type="evidence" value="ECO:0007669"/>
    <property type="project" value="UniProtKB-KW"/>
</dbReference>
<dbReference type="GO" id="GO:0000911">
    <property type="term" value="P:cytokinesis by cell plate formation"/>
    <property type="evidence" value="ECO:0000318"/>
    <property type="project" value="GO_Central"/>
</dbReference>
<dbReference type="GO" id="GO:0051781">
    <property type="term" value="P:positive regulation of cell division"/>
    <property type="evidence" value="ECO:0000318"/>
    <property type="project" value="GO_Central"/>
</dbReference>
<dbReference type="GO" id="GO:0045793">
    <property type="term" value="P:positive regulation of cell size"/>
    <property type="evidence" value="ECO:0000318"/>
    <property type="project" value="GO_Central"/>
</dbReference>
<dbReference type="GO" id="GO:0032877">
    <property type="term" value="P:positive regulation of DNA endoreduplication"/>
    <property type="evidence" value="ECO:0000318"/>
    <property type="project" value="GO_Central"/>
</dbReference>
<dbReference type="GO" id="GO:0009826">
    <property type="term" value="P:unidimensional cell growth"/>
    <property type="evidence" value="ECO:0000318"/>
    <property type="project" value="GO_Central"/>
</dbReference>
<dbReference type="Gene3D" id="2.60.120.10">
    <property type="entry name" value="Jelly Rolls"/>
    <property type="match status" value="1"/>
</dbReference>
<dbReference type="InterPro" id="IPR000526">
    <property type="entry name" value="Auxin-bd"/>
</dbReference>
<dbReference type="InterPro" id="IPR014710">
    <property type="entry name" value="RmlC-like_jellyroll"/>
</dbReference>
<dbReference type="InterPro" id="IPR011051">
    <property type="entry name" value="RmlC_Cupin_sf"/>
</dbReference>
<dbReference type="PANTHER" id="PTHR37236">
    <property type="entry name" value="AUXIN-BINDING PROTEIN 1"/>
    <property type="match status" value="1"/>
</dbReference>
<dbReference type="PANTHER" id="PTHR37236:SF1">
    <property type="entry name" value="AUXIN-BINDING PROTEIN 1"/>
    <property type="match status" value="1"/>
</dbReference>
<dbReference type="Pfam" id="PF02041">
    <property type="entry name" value="Auxin_BP"/>
    <property type="match status" value="1"/>
</dbReference>
<dbReference type="PRINTS" id="PR00655">
    <property type="entry name" value="AUXINBINDNGP"/>
</dbReference>
<dbReference type="SUPFAM" id="SSF51182">
    <property type="entry name" value="RmlC-like cupins"/>
    <property type="match status" value="1"/>
</dbReference>
<feature type="signal peptide" evidence="1">
    <location>
        <begin position="1"/>
        <end position="41"/>
    </location>
</feature>
<feature type="chain" id="PRO_0000020618" description="Auxin-binding protein 5">
    <location>
        <begin position="42"/>
        <end position="150" status="greater than"/>
    </location>
</feature>
<feature type="binding site" evidence="2">
    <location>
        <position position="98"/>
    </location>
    <ligand>
        <name>Zn(2+)</name>
        <dbReference type="ChEBI" id="CHEBI:29105"/>
    </ligand>
</feature>
<feature type="binding site" evidence="2">
    <location>
        <position position="100"/>
    </location>
    <ligand>
        <name>Zn(2+)</name>
        <dbReference type="ChEBI" id="CHEBI:29105"/>
    </ligand>
</feature>
<feature type="binding site" evidence="2">
    <location>
        <position position="104"/>
    </location>
    <ligand>
        <name>Zn(2+)</name>
        <dbReference type="ChEBI" id="CHEBI:29105"/>
    </ligand>
</feature>
<feature type="binding site" evidence="2">
    <location>
        <position position="147"/>
    </location>
    <ligand>
        <name>Zn(2+)</name>
        <dbReference type="ChEBI" id="CHEBI:29105"/>
    </ligand>
</feature>
<feature type="glycosylation site" description="N-linked (GlcNAc...) asparagine" evidence="2">
    <location>
        <position position="136"/>
    </location>
</feature>
<feature type="non-terminal residue">
    <location>
        <position position="150"/>
    </location>
</feature>